<evidence type="ECO:0000250" key="1"/>
<evidence type="ECO:0000305" key="2"/>
<organism>
    <name type="scientific">Methanosarcina acetivorans (strain ATCC 35395 / DSM 2834 / JCM 12185 / C2A)</name>
    <dbReference type="NCBI Taxonomy" id="188937"/>
    <lineage>
        <taxon>Archaea</taxon>
        <taxon>Methanobacteriati</taxon>
        <taxon>Methanobacteriota</taxon>
        <taxon>Stenosarchaea group</taxon>
        <taxon>Methanomicrobia</taxon>
        <taxon>Methanosarcinales</taxon>
        <taxon>Methanosarcinaceae</taxon>
        <taxon>Methanosarcina</taxon>
    </lineage>
</organism>
<feature type="chain" id="PRO_0000099036" description="Tryptophan synthase beta chain 1">
    <location>
        <begin position="1"/>
        <end position="403"/>
    </location>
</feature>
<feature type="modified residue" description="N6-(pyridoxal phosphate)lysine" evidence="1">
    <location>
        <position position="93"/>
    </location>
</feature>
<protein>
    <recommendedName>
        <fullName>Tryptophan synthase beta chain 1</fullName>
        <ecNumber>4.2.1.20</ecNumber>
    </recommendedName>
</protein>
<dbReference type="EC" id="4.2.1.20"/>
<dbReference type="EMBL" id="AE010299">
    <property type="protein sequence ID" value="AAM06364.1"/>
    <property type="molecule type" value="Genomic_DNA"/>
</dbReference>
<dbReference type="RefSeq" id="WP_011022931.1">
    <property type="nucleotide sequence ID" value="NC_003552.1"/>
</dbReference>
<dbReference type="SMR" id="Q8TLP3"/>
<dbReference type="FunCoup" id="Q8TLP3">
    <property type="interactions" value="139"/>
</dbReference>
<dbReference type="STRING" id="188937.MA_2991"/>
<dbReference type="EnsemblBacteria" id="AAM06364">
    <property type="protein sequence ID" value="AAM06364"/>
    <property type="gene ID" value="MA_2991"/>
</dbReference>
<dbReference type="GeneID" id="1474885"/>
<dbReference type="KEGG" id="mac:MA_2991"/>
<dbReference type="HOGENOM" id="CLU_016734_3_1_2"/>
<dbReference type="InParanoid" id="Q8TLP3"/>
<dbReference type="OrthoDB" id="371827at2157"/>
<dbReference type="PhylomeDB" id="Q8TLP3"/>
<dbReference type="UniPathway" id="UPA00035">
    <property type="reaction ID" value="UER00044"/>
</dbReference>
<dbReference type="Proteomes" id="UP000002487">
    <property type="component" value="Chromosome"/>
</dbReference>
<dbReference type="GO" id="GO:0005737">
    <property type="term" value="C:cytoplasm"/>
    <property type="evidence" value="ECO:0000318"/>
    <property type="project" value="GO_Central"/>
</dbReference>
<dbReference type="GO" id="GO:0004834">
    <property type="term" value="F:tryptophan synthase activity"/>
    <property type="evidence" value="ECO:0007669"/>
    <property type="project" value="UniProtKB-UniRule"/>
</dbReference>
<dbReference type="GO" id="GO:0000162">
    <property type="term" value="P:L-tryptophan biosynthetic process"/>
    <property type="evidence" value="ECO:0000318"/>
    <property type="project" value="GO_Central"/>
</dbReference>
<dbReference type="CDD" id="cd06446">
    <property type="entry name" value="Trp-synth_B"/>
    <property type="match status" value="1"/>
</dbReference>
<dbReference type="FunFam" id="3.40.50.1100:FF:000001">
    <property type="entry name" value="Tryptophan synthase beta chain"/>
    <property type="match status" value="1"/>
</dbReference>
<dbReference type="FunFam" id="3.40.50.1100:FF:000004">
    <property type="entry name" value="Tryptophan synthase beta chain"/>
    <property type="match status" value="1"/>
</dbReference>
<dbReference type="Gene3D" id="3.40.50.1100">
    <property type="match status" value="2"/>
</dbReference>
<dbReference type="HAMAP" id="MF_00133">
    <property type="entry name" value="Trp_synth_beta"/>
    <property type="match status" value="1"/>
</dbReference>
<dbReference type="InterPro" id="IPR006653">
    <property type="entry name" value="Trp_synth_b_CS"/>
</dbReference>
<dbReference type="InterPro" id="IPR006654">
    <property type="entry name" value="Trp_synth_beta"/>
</dbReference>
<dbReference type="InterPro" id="IPR023026">
    <property type="entry name" value="Trp_synth_beta/beta-like"/>
</dbReference>
<dbReference type="InterPro" id="IPR001926">
    <property type="entry name" value="TrpB-like_PALP"/>
</dbReference>
<dbReference type="InterPro" id="IPR036052">
    <property type="entry name" value="TrpB-like_PALP_sf"/>
</dbReference>
<dbReference type="NCBIfam" id="TIGR00263">
    <property type="entry name" value="trpB"/>
    <property type="match status" value="1"/>
</dbReference>
<dbReference type="PANTHER" id="PTHR48077:SF3">
    <property type="entry name" value="TRYPTOPHAN SYNTHASE"/>
    <property type="match status" value="1"/>
</dbReference>
<dbReference type="PANTHER" id="PTHR48077">
    <property type="entry name" value="TRYPTOPHAN SYNTHASE-RELATED"/>
    <property type="match status" value="1"/>
</dbReference>
<dbReference type="Pfam" id="PF00291">
    <property type="entry name" value="PALP"/>
    <property type="match status" value="1"/>
</dbReference>
<dbReference type="PIRSF" id="PIRSF001413">
    <property type="entry name" value="Trp_syn_beta"/>
    <property type="match status" value="1"/>
</dbReference>
<dbReference type="SUPFAM" id="SSF53686">
    <property type="entry name" value="Tryptophan synthase beta subunit-like PLP-dependent enzymes"/>
    <property type="match status" value="1"/>
</dbReference>
<dbReference type="PROSITE" id="PS00168">
    <property type="entry name" value="TRP_SYNTHASE_BETA"/>
    <property type="match status" value="1"/>
</dbReference>
<gene>
    <name type="primary">trpB1</name>
    <name type="ordered locus">MA_2991</name>
</gene>
<name>TRPB1_METAC</name>
<proteinExistence type="inferred from homology"/>
<keyword id="KW-0028">Amino-acid biosynthesis</keyword>
<keyword id="KW-0057">Aromatic amino acid biosynthesis</keyword>
<keyword id="KW-0456">Lyase</keyword>
<keyword id="KW-0663">Pyridoxal phosphate</keyword>
<keyword id="KW-1185">Reference proteome</keyword>
<keyword id="KW-0822">Tryptophan biosynthesis</keyword>
<reference key="1">
    <citation type="journal article" date="2002" name="Genome Res.">
        <title>The genome of Methanosarcina acetivorans reveals extensive metabolic and physiological diversity.</title>
        <authorList>
            <person name="Galagan J.E."/>
            <person name="Nusbaum C."/>
            <person name="Roy A."/>
            <person name="Endrizzi M.G."/>
            <person name="Macdonald P."/>
            <person name="FitzHugh W."/>
            <person name="Calvo S."/>
            <person name="Engels R."/>
            <person name="Smirnov S."/>
            <person name="Atnoor D."/>
            <person name="Brown A."/>
            <person name="Allen N."/>
            <person name="Naylor J."/>
            <person name="Stange-Thomann N."/>
            <person name="DeArellano K."/>
            <person name="Johnson R."/>
            <person name="Linton L."/>
            <person name="McEwan P."/>
            <person name="McKernan K."/>
            <person name="Talamas J."/>
            <person name="Tirrell A."/>
            <person name="Ye W."/>
            <person name="Zimmer A."/>
            <person name="Barber R.D."/>
            <person name="Cann I."/>
            <person name="Graham D.E."/>
            <person name="Grahame D.A."/>
            <person name="Guss A.M."/>
            <person name="Hedderich R."/>
            <person name="Ingram-Smith C."/>
            <person name="Kuettner H.C."/>
            <person name="Krzycki J.A."/>
            <person name="Leigh J.A."/>
            <person name="Li W."/>
            <person name="Liu J."/>
            <person name="Mukhopadhyay B."/>
            <person name="Reeve J.N."/>
            <person name="Smith K."/>
            <person name="Springer T.A."/>
            <person name="Umayam L.A."/>
            <person name="White O."/>
            <person name="White R.H."/>
            <person name="de Macario E.C."/>
            <person name="Ferry J.G."/>
            <person name="Jarrell K.F."/>
            <person name="Jing H."/>
            <person name="Macario A.J.L."/>
            <person name="Paulsen I.T."/>
            <person name="Pritchett M."/>
            <person name="Sowers K.R."/>
            <person name="Swanson R.V."/>
            <person name="Zinder S.H."/>
            <person name="Lander E."/>
            <person name="Metcalf W.W."/>
            <person name="Birren B."/>
        </authorList>
    </citation>
    <scope>NUCLEOTIDE SEQUENCE [LARGE SCALE GENOMIC DNA]</scope>
    <source>
        <strain>ATCC 35395 / DSM 2834 / JCM 12185 / C2A</strain>
    </source>
</reference>
<accession>Q8TLP3</accession>
<sequence length="403" mass="43932">MTETKVSEFQLKGKYGKYGGQYVPEVLMPALEELDVGYEKYKNDPESLAELDHYLRDFAGRETPLYFARNLSKKYGTKVYLKREDLVHGGAHKLNNALGQALLAKFMGKTRLIAETGAGQHGTATAMVGATLGFETIVYMGAKDIKRQQMNAYRMELMGTEVRAVETGSKTLKDAINEAMRDWVTNIENTHYLIGSVVGPHPYPMIVRDFQSVIGKEVKEQAMEKEGRLPDSIIACAGGGSNAMGTFHPFIEDREVKLIAVEAGGKGLKCTEKAALHSASLCIGEEGILHGARTKILQDKNGQILESESVSAGLDYSGVGPELAYLSESGRVTARYVTDDEALDAFNELSRLEGIIPALESSHALAYLKKAAESGELGEFVVVNLSGRGDKDLETVLSLRRGV</sequence>
<comment type="function">
    <text evidence="1">The beta subunit is responsible for the synthesis of L-tryptophan from indole and L-serine.</text>
</comment>
<comment type="catalytic activity">
    <reaction>
        <text>(1S,2R)-1-C-(indol-3-yl)glycerol 3-phosphate + L-serine = D-glyceraldehyde 3-phosphate + L-tryptophan + H2O</text>
        <dbReference type="Rhea" id="RHEA:10532"/>
        <dbReference type="ChEBI" id="CHEBI:15377"/>
        <dbReference type="ChEBI" id="CHEBI:33384"/>
        <dbReference type="ChEBI" id="CHEBI:57912"/>
        <dbReference type="ChEBI" id="CHEBI:58866"/>
        <dbReference type="ChEBI" id="CHEBI:59776"/>
        <dbReference type="EC" id="4.2.1.20"/>
    </reaction>
</comment>
<comment type="cofactor">
    <cofactor evidence="1">
        <name>pyridoxal 5'-phosphate</name>
        <dbReference type="ChEBI" id="CHEBI:597326"/>
    </cofactor>
</comment>
<comment type="pathway">
    <text>Amino-acid biosynthesis; L-tryptophan biosynthesis; L-tryptophan from chorismate: step 5/5.</text>
</comment>
<comment type="subunit">
    <text evidence="1">Tetramer of two alpha and two beta chains.</text>
</comment>
<comment type="similarity">
    <text evidence="2">Belongs to the TrpB family.</text>
</comment>